<gene>
    <name evidence="1" type="primary">hemC</name>
    <name type="ordered locus">SeD_A4327</name>
</gene>
<evidence type="ECO:0000255" key="1">
    <source>
        <dbReference type="HAMAP-Rule" id="MF_00260"/>
    </source>
</evidence>
<proteinExistence type="inferred from homology"/>
<accession>B5FN93</accession>
<organism>
    <name type="scientific">Salmonella dublin (strain CT_02021853)</name>
    <dbReference type="NCBI Taxonomy" id="439851"/>
    <lineage>
        <taxon>Bacteria</taxon>
        <taxon>Pseudomonadati</taxon>
        <taxon>Pseudomonadota</taxon>
        <taxon>Gammaproteobacteria</taxon>
        <taxon>Enterobacterales</taxon>
        <taxon>Enterobacteriaceae</taxon>
        <taxon>Salmonella</taxon>
    </lineage>
</organism>
<reference key="1">
    <citation type="journal article" date="2011" name="J. Bacteriol.">
        <title>Comparative genomics of 28 Salmonella enterica isolates: evidence for CRISPR-mediated adaptive sublineage evolution.</title>
        <authorList>
            <person name="Fricke W.F."/>
            <person name="Mammel M.K."/>
            <person name="McDermott P.F."/>
            <person name="Tartera C."/>
            <person name="White D.G."/>
            <person name="Leclerc J.E."/>
            <person name="Ravel J."/>
            <person name="Cebula T.A."/>
        </authorList>
    </citation>
    <scope>NUCLEOTIDE SEQUENCE [LARGE SCALE GENOMIC DNA]</scope>
    <source>
        <strain>CT_02021853</strain>
    </source>
</reference>
<keyword id="KW-0627">Porphyrin biosynthesis</keyword>
<keyword id="KW-0808">Transferase</keyword>
<comment type="function">
    <text evidence="1">Tetrapolymerization of the monopyrrole PBG into the hydroxymethylbilane pre-uroporphyrinogen in several discrete steps.</text>
</comment>
<comment type="catalytic activity">
    <reaction evidence="1">
        <text>4 porphobilinogen + H2O = hydroxymethylbilane + 4 NH4(+)</text>
        <dbReference type="Rhea" id="RHEA:13185"/>
        <dbReference type="ChEBI" id="CHEBI:15377"/>
        <dbReference type="ChEBI" id="CHEBI:28938"/>
        <dbReference type="ChEBI" id="CHEBI:57845"/>
        <dbReference type="ChEBI" id="CHEBI:58126"/>
        <dbReference type="EC" id="2.5.1.61"/>
    </reaction>
</comment>
<comment type="cofactor">
    <cofactor evidence="1">
        <name>dipyrromethane</name>
        <dbReference type="ChEBI" id="CHEBI:60342"/>
    </cofactor>
    <text evidence="1">Binds 1 dipyrromethane group covalently.</text>
</comment>
<comment type="pathway">
    <text evidence="1">Porphyrin-containing compound metabolism; protoporphyrin-IX biosynthesis; coproporphyrinogen-III from 5-aminolevulinate: step 2/4.</text>
</comment>
<comment type="subunit">
    <text evidence="1">Monomer.</text>
</comment>
<comment type="miscellaneous">
    <text evidence="1">The porphobilinogen subunits are added to the dipyrromethane group.</text>
</comment>
<comment type="similarity">
    <text evidence="1">Belongs to the HMBS family.</text>
</comment>
<protein>
    <recommendedName>
        <fullName evidence="1">Porphobilinogen deaminase</fullName>
        <shortName evidence="1">PBG</shortName>
        <ecNumber evidence="1">2.5.1.61</ecNumber>
    </recommendedName>
    <alternativeName>
        <fullName evidence="1">Hydroxymethylbilane synthase</fullName>
        <shortName evidence="1">HMBS</shortName>
    </alternativeName>
    <alternativeName>
        <fullName evidence="1">Pre-uroporphyrinogen synthase</fullName>
    </alternativeName>
</protein>
<sequence>MLDNVLRIATRQSPLALWQAHYVKDALMATHPGLTVELVPMVTRGDVILDTPLAKVGGKGLFVKELEIALLEKRADIAVHSMKDVPVAFPDGLGLVTICEREDPRDAFVSNKYHSLDDLPAGSIVGTSSLRRQCQLAERRPDLIIRSLRGNVGTRLGKLDNGDYDAIILAVAGLKRLGLESRIRTALPPDVSLPAVGQGAVGIECRLDDARTQALLAPLNHSQTALRVTAERAMNTRLEGGCQVPIGSYAEIINGEIWLRALVGAPDGSVMVRGERRGSPEQAEQMGISLAEELLENGARAILTEVYNGETPA</sequence>
<feature type="chain" id="PRO_1000114175" description="Porphobilinogen deaminase">
    <location>
        <begin position="1"/>
        <end position="313"/>
    </location>
</feature>
<feature type="modified residue" description="S-(dipyrrolylmethanemethyl)cysteine" evidence="1">
    <location>
        <position position="242"/>
    </location>
</feature>
<dbReference type="EC" id="2.5.1.61" evidence="1"/>
<dbReference type="EMBL" id="CP001144">
    <property type="protein sequence ID" value="ACH75030.1"/>
    <property type="molecule type" value="Genomic_DNA"/>
</dbReference>
<dbReference type="RefSeq" id="WP_001521319.1">
    <property type="nucleotide sequence ID" value="NC_011205.1"/>
</dbReference>
<dbReference type="SMR" id="B5FN93"/>
<dbReference type="KEGG" id="sed:SeD_A4327"/>
<dbReference type="HOGENOM" id="CLU_019704_0_2_6"/>
<dbReference type="UniPathway" id="UPA00251">
    <property type="reaction ID" value="UER00319"/>
</dbReference>
<dbReference type="Proteomes" id="UP000008322">
    <property type="component" value="Chromosome"/>
</dbReference>
<dbReference type="GO" id="GO:0005737">
    <property type="term" value="C:cytoplasm"/>
    <property type="evidence" value="ECO:0007669"/>
    <property type="project" value="TreeGrafter"/>
</dbReference>
<dbReference type="GO" id="GO:0004418">
    <property type="term" value="F:hydroxymethylbilane synthase activity"/>
    <property type="evidence" value="ECO:0007669"/>
    <property type="project" value="UniProtKB-UniRule"/>
</dbReference>
<dbReference type="GO" id="GO:0006782">
    <property type="term" value="P:protoporphyrinogen IX biosynthetic process"/>
    <property type="evidence" value="ECO:0007669"/>
    <property type="project" value="UniProtKB-UniRule"/>
</dbReference>
<dbReference type="CDD" id="cd13646">
    <property type="entry name" value="PBP2_EcHMBS_like"/>
    <property type="match status" value="1"/>
</dbReference>
<dbReference type="FunFam" id="3.30.160.40:FF:000002">
    <property type="entry name" value="Porphobilinogen deaminase"/>
    <property type="match status" value="1"/>
</dbReference>
<dbReference type="FunFam" id="3.40.190.10:FF:000004">
    <property type="entry name" value="Porphobilinogen deaminase"/>
    <property type="match status" value="1"/>
</dbReference>
<dbReference type="FunFam" id="3.40.190.10:FF:000005">
    <property type="entry name" value="Porphobilinogen deaminase"/>
    <property type="match status" value="1"/>
</dbReference>
<dbReference type="Gene3D" id="3.40.190.10">
    <property type="entry name" value="Periplasmic binding protein-like II"/>
    <property type="match status" value="2"/>
</dbReference>
<dbReference type="Gene3D" id="3.30.160.40">
    <property type="entry name" value="Porphobilinogen deaminase, C-terminal domain"/>
    <property type="match status" value="1"/>
</dbReference>
<dbReference type="HAMAP" id="MF_00260">
    <property type="entry name" value="Porphobil_deam"/>
    <property type="match status" value="1"/>
</dbReference>
<dbReference type="InterPro" id="IPR000860">
    <property type="entry name" value="HemC"/>
</dbReference>
<dbReference type="InterPro" id="IPR022419">
    <property type="entry name" value="Porphobilin_deaminase_cofac_BS"/>
</dbReference>
<dbReference type="InterPro" id="IPR022417">
    <property type="entry name" value="Porphobilin_deaminase_N"/>
</dbReference>
<dbReference type="InterPro" id="IPR022418">
    <property type="entry name" value="Porphobilinogen_deaminase_C"/>
</dbReference>
<dbReference type="InterPro" id="IPR036803">
    <property type="entry name" value="Porphobilinogen_deaminase_C_sf"/>
</dbReference>
<dbReference type="NCBIfam" id="TIGR00212">
    <property type="entry name" value="hemC"/>
    <property type="match status" value="1"/>
</dbReference>
<dbReference type="PANTHER" id="PTHR11557">
    <property type="entry name" value="PORPHOBILINOGEN DEAMINASE"/>
    <property type="match status" value="1"/>
</dbReference>
<dbReference type="PANTHER" id="PTHR11557:SF0">
    <property type="entry name" value="PORPHOBILINOGEN DEAMINASE"/>
    <property type="match status" value="1"/>
</dbReference>
<dbReference type="Pfam" id="PF01379">
    <property type="entry name" value="Porphobil_deam"/>
    <property type="match status" value="1"/>
</dbReference>
<dbReference type="Pfam" id="PF03900">
    <property type="entry name" value="Porphobil_deamC"/>
    <property type="match status" value="1"/>
</dbReference>
<dbReference type="PIRSF" id="PIRSF001438">
    <property type="entry name" value="4pyrrol_synth_OHMeBilane_synth"/>
    <property type="match status" value="1"/>
</dbReference>
<dbReference type="PRINTS" id="PR00151">
    <property type="entry name" value="PORPHBDMNASE"/>
</dbReference>
<dbReference type="SUPFAM" id="SSF53850">
    <property type="entry name" value="Periplasmic binding protein-like II"/>
    <property type="match status" value="1"/>
</dbReference>
<dbReference type="SUPFAM" id="SSF54782">
    <property type="entry name" value="Porphobilinogen deaminase (hydroxymethylbilane synthase), C-terminal domain"/>
    <property type="match status" value="1"/>
</dbReference>
<dbReference type="PROSITE" id="PS00533">
    <property type="entry name" value="PORPHOBILINOGEN_DEAM"/>
    <property type="match status" value="1"/>
</dbReference>
<name>HEM3_SALDC</name>